<feature type="chain" id="PRO_1000201315" description="tRNA U34 carboxymethyltransferase">
    <location>
        <begin position="1"/>
        <end position="324"/>
    </location>
</feature>
<feature type="binding site" evidence="1">
    <location>
        <position position="91"/>
    </location>
    <ligand>
        <name>carboxy-S-adenosyl-L-methionine</name>
        <dbReference type="ChEBI" id="CHEBI:134278"/>
    </ligand>
</feature>
<feature type="binding site" evidence="1">
    <location>
        <position position="105"/>
    </location>
    <ligand>
        <name>carboxy-S-adenosyl-L-methionine</name>
        <dbReference type="ChEBI" id="CHEBI:134278"/>
    </ligand>
</feature>
<feature type="binding site" evidence="1">
    <location>
        <position position="110"/>
    </location>
    <ligand>
        <name>carboxy-S-adenosyl-L-methionine</name>
        <dbReference type="ChEBI" id="CHEBI:134278"/>
    </ligand>
</feature>
<feature type="binding site" evidence="1">
    <location>
        <position position="130"/>
    </location>
    <ligand>
        <name>carboxy-S-adenosyl-L-methionine</name>
        <dbReference type="ChEBI" id="CHEBI:134278"/>
    </ligand>
</feature>
<feature type="binding site" evidence="1">
    <location>
        <begin position="152"/>
        <end position="154"/>
    </location>
    <ligand>
        <name>carboxy-S-adenosyl-L-methionine</name>
        <dbReference type="ChEBI" id="CHEBI:134278"/>
    </ligand>
</feature>
<feature type="binding site" evidence="1">
    <location>
        <begin position="181"/>
        <end position="182"/>
    </location>
    <ligand>
        <name>carboxy-S-adenosyl-L-methionine</name>
        <dbReference type="ChEBI" id="CHEBI:134278"/>
    </ligand>
</feature>
<feature type="binding site" evidence="1">
    <location>
        <position position="196"/>
    </location>
    <ligand>
        <name>carboxy-S-adenosyl-L-methionine</name>
        <dbReference type="ChEBI" id="CHEBI:134278"/>
    </ligand>
</feature>
<feature type="binding site" evidence="1">
    <location>
        <position position="200"/>
    </location>
    <ligand>
        <name>carboxy-S-adenosyl-L-methionine</name>
        <dbReference type="ChEBI" id="CHEBI:134278"/>
    </ligand>
</feature>
<feature type="binding site" evidence="1">
    <location>
        <position position="315"/>
    </location>
    <ligand>
        <name>carboxy-S-adenosyl-L-methionine</name>
        <dbReference type="ChEBI" id="CHEBI:134278"/>
    </ligand>
</feature>
<comment type="function">
    <text evidence="1">Catalyzes carboxymethyl transfer from carboxy-S-adenosyl-L-methionine (Cx-SAM) to 5-hydroxyuridine (ho5U) to form 5-carboxymethoxyuridine (cmo5U) at position 34 in tRNAs.</text>
</comment>
<comment type="catalytic activity">
    <reaction evidence="1">
        <text>carboxy-S-adenosyl-L-methionine + 5-hydroxyuridine(34) in tRNA = 5-carboxymethoxyuridine(34) in tRNA + S-adenosyl-L-homocysteine + H(+)</text>
        <dbReference type="Rhea" id="RHEA:52848"/>
        <dbReference type="Rhea" id="RHEA-COMP:13381"/>
        <dbReference type="Rhea" id="RHEA-COMP:13383"/>
        <dbReference type="ChEBI" id="CHEBI:15378"/>
        <dbReference type="ChEBI" id="CHEBI:57856"/>
        <dbReference type="ChEBI" id="CHEBI:134278"/>
        <dbReference type="ChEBI" id="CHEBI:136877"/>
        <dbReference type="ChEBI" id="CHEBI:136879"/>
    </reaction>
</comment>
<comment type="subunit">
    <text evidence="1">Homotetramer.</text>
</comment>
<comment type="similarity">
    <text evidence="1">Belongs to the class I-like SAM-binding methyltransferase superfamily. CmoB family.</text>
</comment>
<gene>
    <name evidence="1" type="primary">cmoB</name>
    <name type="ordered locus">VFMJ11_0988</name>
</gene>
<keyword id="KW-0808">Transferase</keyword>
<keyword id="KW-0819">tRNA processing</keyword>
<proteinExistence type="inferred from homology"/>
<protein>
    <recommendedName>
        <fullName evidence="1">tRNA U34 carboxymethyltransferase</fullName>
        <ecNumber evidence="1">2.5.1.-</ecNumber>
    </recommendedName>
</protein>
<reference key="1">
    <citation type="submission" date="2008-08" db="EMBL/GenBank/DDBJ databases">
        <title>Complete sequence of Vibrio fischeri strain MJ11.</title>
        <authorList>
            <person name="Mandel M.J."/>
            <person name="Stabb E.V."/>
            <person name="Ruby E.G."/>
            <person name="Ferriera S."/>
            <person name="Johnson J."/>
            <person name="Kravitz S."/>
            <person name="Beeson K."/>
            <person name="Sutton G."/>
            <person name="Rogers Y.-H."/>
            <person name="Friedman R."/>
            <person name="Frazier M."/>
            <person name="Venter J.C."/>
        </authorList>
    </citation>
    <scope>NUCLEOTIDE SEQUENCE [LARGE SCALE GENOMIC DNA]</scope>
    <source>
        <strain>MJ11</strain>
    </source>
</reference>
<sequence length="324" mass="37249">MFNFANFYQLLAQDTVLQPWLNTLPQQLTDWQNAEHGDIERWIKALKKIPEGCADNIDLKSSVTLSNNTPLIDGERKKLENLLQTFHPWRKGPFTVHDIHIDTEWRSDWKWDRLLPHITPLKNRSVLDVGCGNGYHMWRMLGEEARLCVGIDPSHLFLIQFEAIRKLMGNDQRAHLLPLGIEQLPELNAFDTVFSMGVLYHRRSPLDHLIQLKNQLVAGGELVLETLVIDGDENAVLMPVDRYAQMRNVYFFPSARALKVWLESVGFVDVKIVDECVTTTGEQRSTEWMKHNSLPEYLDPNDSTKTIEGHPAPKRAILIAKKPD</sequence>
<accession>B5FCP7</accession>
<name>CMOB_ALIFM</name>
<organism>
    <name type="scientific">Aliivibrio fischeri (strain MJ11)</name>
    <name type="common">Vibrio fischeri</name>
    <dbReference type="NCBI Taxonomy" id="388396"/>
    <lineage>
        <taxon>Bacteria</taxon>
        <taxon>Pseudomonadati</taxon>
        <taxon>Pseudomonadota</taxon>
        <taxon>Gammaproteobacteria</taxon>
        <taxon>Vibrionales</taxon>
        <taxon>Vibrionaceae</taxon>
        <taxon>Aliivibrio</taxon>
    </lineage>
</organism>
<dbReference type="EC" id="2.5.1.-" evidence="1"/>
<dbReference type="EMBL" id="CP001139">
    <property type="protein sequence ID" value="ACH65286.1"/>
    <property type="molecule type" value="Genomic_DNA"/>
</dbReference>
<dbReference type="RefSeq" id="WP_012532950.1">
    <property type="nucleotide sequence ID" value="NC_011184.1"/>
</dbReference>
<dbReference type="SMR" id="B5FCP7"/>
<dbReference type="KEGG" id="vfm:VFMJ11_0988"/>
<dbReference type="HOGENOM" id="CLU_052665_0_0_6"/>
<dbReference type="Proteomes" id="UP000001857">
    <property type="component" value="Chromosome I"/>
</dbReference>
<dbReference type="GO" id="GO:0016765">
    <property type="term" value="F:transferase activity, transferring alkyl or aryl (other than methyl) groups"/>
    <property type="evidence" value="ECO:0007669"/>
    <property type="project" value="UniProtKB-UniRule"/>
</dbReference>
<dbReference type="GO" id="GO:0002098">
    <property type="term" value="P:tRNA wobble uridine modification"/>
    <property type="evidence" value="ECO:0007669"/>
    <property type="project" value="InterPro"/>
</dbReference>
<dbReference type="CDD" id="cd02440">
    <property type="entry name" value="AdoMet_MTases"/>
    <property type="match status" value="1"/>
</dbReference>
<dbReference type="Gene3D" id="3.40.50.150">
    <property type="entry name" value="Vaccinia Virus protein VP39"/>
    <property type="match status" value="1"/>
</dbReference>
<dbReference type="HAMAP" id="MF_01590">
    <property type="entry name" value="tRNA_carboxymethyltr_CmoB"/>
    <property type="match status" value="1"/>
</dbReference>
<dbReference type="InterPro" id="IPR010017">
    <property type="entry name" value="CmoB"/>
</dbReference>
<dbReference type="InterPro" id="IPR027555">
    <property type="entry name" value="Mo5U34_MeTrfas-like"/>
</dbReference>
<dbReference type="InterPro" id="IPR029063">
    <property type="entry name" value="SAM-dependent_MTases_sf"/>
</dbReference>
<dbReference type="NCBIfam" id="NF011650">
    <property type="entry name" value="PRK15068.1"/>
    <property type="match status" value="1"/>
</dbReference>
<dbReference type="NCBIfam" id="TIGR00452">
    <property type="entry name" value="tRNA 5-methoxyuridine(34)/uridine 5-oxyacetic acid(34) synthase CmoB"/>
    <property type="match status" value="1"/>
</dbReference>
<dbReference type="PANTHER" id="PTHR43861">
    <property type="entry name" value="TRANS-ACONITATE 2-METHYLTRANSFERASE-RELATED"/>
    <property type="match status" value="1"/>
</dbReference>
<dbReference type="Pfam" id="PF08003">
    <property type="entry name" value="Methyltransf_9"/>
    <property type="match status" value="1"/>
</dbReference>
<dbReference type="SUPFAM" id="SSF53335">
    <property type="entry name" value="S-adenosyl-L-methionine-dependent methyltransferases"/>
    <property type="match status" value="1"/>
</dbReference>
<evidence type="ECO:0000255" key="1">
    <source>
        <dbReference type="HAMAP-Rule" id="MF_01590"/>
    </source>
</evidence>